<proteinExistence type="inferred from homology"/>
<comment type="function">
    <text evidence="1">Mediates the interaction of DNA replication initiator protein DnaA with DNA polymerase subunit beta sliding clamp (dnaN). Stimulates hydrolysis of ATP-DnaA to ADP-DnaA, rendering DnaA inactive for reinitiation, a process called regulatory inhibition of DnaA or RIDA (By similarity).</text>
</comment>
<comment type="subunit">
    <text evidence="2">The active form seems to be an ADP-bound monomer. Forms the RIDA complex (regulatory inactivation of DnaA) of ATP-DnaA, ADP-Hda and the DNA-loaded beta sliding clamp (dnaN).</text>
</comment>
<comment type="similarity">
    <text evidence="2">Belongs to the DnaA family. HdA subfamily.</text>
</comment>
<comment type="sequence caution" evidence="3">
    <conflict type="erroneous initiation">
        <sequence resource="EMBL-CDS" id="AAG57606"/>
    </conflict>
</comment>
<comment type="sequence caution" evidence="3">
    <conflict type="erroneous initiation">
        <sequence resource="EMBL-CDS" id="BAB36781"/>
    </conflict>
</comment>
<gene>
    <name evidence="2" type="primary">hda</name>
    <name type="ordered locus">Z3759</name>
    <name type="ordered locus">ECs3358</name>
</gene>
<name>HDA_ECO57</name>
<feature type="chain" id="PRO_0000114316" description="DnaA regulatory inactivator Hda">
    <location>
        <begin position="1"/>
        <end position="233"/>
    </location>
</feature>
<organism>
    <name type="scientific">Escherichia coli O157:H7</name>
    <dbReference type="NCBI Taxonomy" id="83334"/>
    <lineage>
        <taxon>Bacteria</taxon>
        <taxon>Pseudomonadati</taxon>
        <taxon>Pseudomonadota</taxon>
        <taxon>Gammaproteobacteria</taxon>
        <taxon>Enterobacterales</taxon>
        <taxon>Enterobacteriaceae</taxon>
        <taxon>Escherichia</taxon>
    </lineage>
</organism>
<sequence>MNTPAQLSLPLYLPDDETFASFWPGDNSSLLAALQNVLRQEHSGYIYLWAREGAGRSHLLHAACAELSQRGDAVGYVPLDKRTWFVPEVLDGMEHLSLVCIDNIECIAGDELWEMAIFDLYNRILESGKTRLLITGDRPPRQLNLGLPDLASRLDWGQIYKLQPLSDEDKLQALQLRARLRGFELPEDVGRFLLKRLDREMRTLFMTLDQLDRASITAQRKLTIPFVKEILKL</sequence>
<keyword id="KW-0235">DNA replication</keyword>
<keyword id="KW-0236">DNA replication inhibitor</keyword>
<keyword id="KW-1185">Reference proteome</keyword>
<dbReference type="EMBL" id="AE005174">
    <property type="protein sequence ID" value="AAG57606.1"/>
    <property type="status" value="ALT_INIT"/>
    <property type="molecule type" value="Genomic_DNA"/>
</dbReference>
<dbReference type="EMBL" id="BA000007">
    <property type="protein sequence ID" value="BAB36781.1"/>
    <property type="status" value="ALT_INIT"/>
    <property type="molecule type" value="Genomic_DNA"/>
</dbReference>
<dbReference type="PIR" id="B85893">
    <property type="entry name" value="B85893"/>
</dbReference>
<dbReference type="PIR" id="F91048">
    <property type="entry name" value="F91048"/>
</dbReference>
<dbReference type="RefSeq" id="NP_311385.1">
    <property type="nucleotide sequence ID" value="NC_002695.1"/>
</dbReference>
<dbReference type="RefSeq" id="WP_001307333.1">
    <property type="nucleotide sequence ID" value="NZ_VOAI01000001.1"/>
</dbReference>
<dbReference type="SMR" id="P69933"/>
<dbReference type="STRING" id="155864.Z3759"/>
<dbReference type="GeneID" id="917118"/>
<dbReference type="KEGG" id="ece:Z3759"/>
<dbReference type="KEGG" id="ecs:ECs_3358"/>
<dbReference type="PATRIC" id="fig|386585.9.peg.3507"/>
<dbReference type="eggNOG" id="COG0593">
    <property type="taxonomic scope" value="Bacteria"/>
</dbReference>
<dbReference type="HOGENOM" id="CLU_072265_1_1_6"/>
<dbReference type="OMA" id="DWGQIYR"/>
<dbReference type="Proteomes" id="UP000000558">
    <property type="component" value="Chromosome"/>
</dbReference>
<dbReference type="Proteomes" id="UP000002519">
    <property type="component" value="Chromosome"/>
</dbReference>
<dbReference type="GO" id="GO:0006270">
    <property type="term" value="P:DNA replication initiation"/>
    <property type="evidence" value="ECO:0007669"/>
    <property type="project" value="TreeGrafter"/>
</dbReference>
<dbReference type="GO" id="GO:0032297">
    <property type="term" value="P:negative regulation of DNA-templated DNA replication initiation"/>
    <property type="evidence" value="ECO:0007669"/>
    <property type="project" value="InterPro"/>
</dbReference>
<dbReference type="FunFam" id="1.10.8.60:FF:000024">
    <property type="entry name" value="DnaA regulatory inactivator Hda"/>
    <property type="match status" value="1"/>
</dbReference>
<dbReference type="FunFam" id="3.40.50.300:FF:000452">
    <property type="entry name" value="DnaA regulatory inactivator Hda"/>
    <property type="match status" value="1"/>
</dbReference>
<dbReference type="Gene3D" id="1.10.8.60">
    <property type="match status" value="1"/>
</dbReference>
<dbReference type="Gene3D" id="3.40.50.300">
    <property type="entry name" value="P-loop containing nucleotide triphosphate hydrolases"/>
    <property type="match status" value="1"/>
</dbReference>
<dbReference type="HAMAP" id="MF_01158">
    <property type="entry name" value="Hda"/>
    <property type="match status" value="1"/>
</dbReference>
<dbReference type="InterPro" id="IPR020591">
    <property type="entry name" value="Chromosome_initiator_DnaA-like"/>
</dbReference>
<dbReference type="InterPro" id="IPR013317">
    <property type="entry name" value="DnaA_dom"/>
</dbReference>
<dbReference type="InterPro" id="IPR017788">
    <property type="entry name" value="Hda"/>
</dbReference>
<dbReference type="InterPro" id="IPR022864">
    <property type="entry name" value="Hda_Enterobact"/>
</dbReference>
<dbReference type="InterPro" id="IPR055199">
    <property type="entry name" value="Hda_lid"/>
</dbReference>
<dbReference type="InterPro" id="IPR027417">
    <property type="entry name" value="P-loop_NTPase"/>
</dbReference>
<dbReference type="NCBIfam" id="TIGR03420">
    <property type="entry name" value="DnaA_homol_Hda"/>
    <property type="match status" value="1"/>
</dbReference>
<dbReference type="NCBIfam" id="NF005982">
    <property type="entry name" value="PRK08084.1"/>
    <property type="match status" value="1"/>
</dbReference>
<dbReference type="PANTHER" id="PTHR30050">
    <property type="entry name" value="CHROMOSOMAL REPLICATION INITIATOR PROTEIN DNAA"/>
    <property type="match status" value="1"/>
</dbReference>
<dbReference type="PANTHER" id="PTHR30050:SF5">
    <property type="entry name" value="DNAA REGULATORY INACTIVATOR HDA"/>
    <property type="match status" value="1"/>
</dbReference>
<dbReference type="Pfam" id="PF00308">
    <property type="entry name" value="Bac_DnaA"/>
    <property type="match status" value="1"/>
</dbReference>
<dbReference type="Pfam" id="PF22688">
    <property type="entry name" value="Hda_lid"/>
    <property type="match status" value="1"/>
</dbReference>
<dbReference type="PRINTS" id="PR00051">
    <property type="entry name" value="DNAA"/>
</dbReference>
<dbReference type="SUPFAM" id="SSF52540">
    <property type="entry name" value="P-loop containing nucleoside triphosphate hydrolases"/>
    <property type="match status" value="1"/>
</dbReference>
<evidence type="ECO:0000250" key="1"/>
<evidence type="ECO:0000255" key="2">
    <source>
        <dbReference type="HAMAP-Rule" id="MF_01158"/>
    </source>
</evidence>
<evidence type="ECO:0000305" key="3"/>
<protein>
    <recommendedName>
        <fullName evidence="2">DnaA regulatory inactivator Hda</fullName>
    </recommendedName>
</protein>
<accession>P69933</accession>
<accession>P76570</accession>
<accession>P76979</accession>
<reference key="1">
    <citation type="journal article" date="2001" name="Nature">
        <title>Genome sequence of enterohaemorrhagic Escherichia coli O157:H7.</title>
        <authorList>
            <person name="Perna N.T."/>
            <person name="Plunkett G. III"/>
            <person name="Burland V."/>
            <person name="Mau B."/>
            <person name="Glasner J.D."/>
            <person name="Rose D.J."/>
            <person name="Mayhew G.F."/>
            <person name="Evans P.S."/>
            <person name="Gregor J."/>
            <person name="Kirkpatrick H.A."/>
            <person name="Posfai G."/>
            <person name="Hackett J."/>
            <person name="Klink S."/>
            <person name="Boutin A."/>
            <person name="Shao Y."/>
            <person name="Miller L."/>
            <person name="Grotbeck E.J."/>
            <person name="Davis N.W."/>
            <person name="Lim A."/>
            <person name="Dimalanta E.T."/>
            <person name="Potamousis K."/>
            <person name="Apodaca J."/>
            <person name="Anantharaman T.S."/>
            <person name="Lin J."/>
            <person name="Yen G."/>
            <person name="Schwartz D.C."/>
            <person name="Welch R.A."/>
            <person name="Blattner F.R."/>
        </authorList>
    </citation>
    <scope>NUCLEOTIDE SEQUENCE [LARGE SCALE GENOMIC DNA]</scope>
    <source>
        <strain>O157:H7 / EDL933 / ATCC 700927 / EHEC</strain>
    </source>
</reference>
<reference key="2">
    <citation type="journal article" date="2001" name="DNA Res.">
        <title>Complete genome sequence of enterohemorrhagic Escherichia coli O157:H7 and genomic comparison with a laboratory strain K-12.</title>
        <authorList>
            <person name="Hayashi T."/>
            <person name="Makino K."/>
            <person name="Ohnishi M."/>
            <person name="Kurokawa K."/>
            <person name="Ishii K."/>
            <person name="Yokoyama K."/>
            <person name="Han C.-G."/>
            <person name="Ohtsubo E."/>
            <person name="Nakayama K."/>
            <person name="Murata T."/>
            <person name="Tanaka M."/>
            <person name="Tobe T."/>
            <person name="Iida T."/>
            <person name="Takami H."/>
            <person name="Honda T."/>
            <person name="Sasakawa C."/>
            <person name="Ogasawara N."/>
            <person name="Yasunaga T."/>
            <person name="Kuhara S."/>
            <person name="Shiba T."/>
            <person name="Hattori M."/>
            <person name="Shinagawa H."/>
        </authorList>
    </citation>
    <scope>NUCLEOTIDE SEQUENCE [LARGE SCALE GENOMIC DNA]</scope>
    <source>
        <strain>O157:H7 / Sakai / RIMD 0509952 / EHEC</strain>
    </source>
</reference>